<accession>Q8R1Q9</accession>
<evidence type="ECO:0000250" key="1">
    <source>
        <dbReference type="UniProtKB" id="Q9H477"/>
    </source>
</evidence>
<evidence type="ECO:0000255" key="2">
    <source>
        <dbReference type="HAMAP-Rule" id="MF_03215"/>
    </source>
</evidence>
<evidence type="ECO:0000312" key="3">
    <source>
        <dbReference type="EMBL" id="AAH23339.1"/>
    </source>
</evidence>
<evidence type="ECO:0000312" key="4">
    <source>
        <dbReference type="EMBL" id="BAE23825.1"/>
    </source>
</evidence>
<evidence type="ECO:0000312" key="5">
    <source>
        <dbReference type="MGI" id="MGI:1918586"/>
    </source>
</evidence>
<reference evidence="4" key="1">
    <citation type="journal article" date="2005" name="Science">
        <title>The transcriptional landscape of the mammalian genome.</title>
        <authorList>
            <person name="Carninci P."/>
            <person name="Kasukawa T."/>
            <person name="Katayama S."/>
            <person name="Gough J."/>
            <person name="Frith M.C."/>
            <person name="Maeda N."/>
            <person name="Oyama R."/>
            <person name="Ravasi T."/>
            <person name="Lenhard B."/>
            <person name="Wells C."/>
            <person name="Kodzius R."/>
            <person name="Shimokawa K."/>
            <person name="Bajic V.B."/>
            <person name="Brenner S.E."/>
            <person name="Batalov S."/>
            <person name="Forrest A.R."/>
            <person name="Zavolan M."/>
            <person name="Davis M.J."/>
            <person name="Wilming L.G."/>
            <person name="Aidinis V."/>
            <person name="Allen J.E."/>
            <person name="Ambesi-Impiombato A."/>
            <person name="Apweiler R."/>
            <person name="Aturaliya R.N."/>
            <person name="Bailey T.L."/>
            <person name="Bansal M."/>
            <person name="Baxter L."/>
            <person name="Beisel K.W."/>
            <person name="Bersano T."/>
            <person name="Bono H."/>
            <person name="Chalk A.M."/>
            <person name="Chiu K.P."/>
            <person name="Choudhary V."/>
            <person name="Christoffels A."/>
            <person name="Clutterbuck D.R."/>
            <person name="Crowe M.L."/>
            <person name="Dalla E."/>
            <person name="Dalrymple B.P."/>
            <person name="de Bono B."/>
            <person name="Della Gatta G."/>
            <person name="di Bernardo D."/>
            <person name="Down T."/>
            <person name="Engstrom P."/>
            <person name="Fagiolini M."/>
            <person name="Faulkner G."/>
            <person name="Fletcher C.F."/>
            <person name="Fukushima T."/>
            <person name="Furuno M."/>
            <person name="Futaki S."/>
            <person name="Gariboldi M."/>
            <person name="Georgii-Hemming P."/>
            <person name="Gingeras T.R."/>
            <person name="Gojobori T."/>
            <person name="Green R.E."/>
            <person name="Gustincich S."/>
            <person name="Harbers M."/>
            <person name="Hayashi Y."/>
            <person name="Hensch T.K."/>
            <person name="Hirokawa N."/>
            <person name="Hill D."/>
            <person name="Huminiecki L."/>
            <person name="Iacono M."/>
            <person name="Ikeo K."/>
            <person name="Iwama A."/>
            <person name="Ishikawa T."/>
            <person name="Jakt M."/>
            <person name="Kanapin A."/>
            <person name="Katoh M."/>
            <person name="Kawasawa Y."/>
            <person name="Kelso J."/>
            <person name="Kitamura H."/>
            <person name="Kitano H."/>
            <person name="Kollias G."/>
            <person name="Krishnan S.P."/>
            <person name="Kruger A."/>
            <person name="Kummerfeld S.K."/>
            <person name="Kurochkin I.V."/>
            <person name="Lareau L.F."/>
            <person name="Lazarevic D."/>
            <person name="Lipovich L."/>
            <person name="Liu J."/>
            <person name="Liuni S."/>
            <person name="McWilliam S."/>
            <person name="Madan Babu M."/>
            <person name="Madera M."/>
            <person name="Marchionni L."/>
            <person name="Matsuda H."/>
            <person name="Matsuzawa S."/>
            <person name="Miki H."/>
            <person name="Mignone F."/>
            <person name="Miyake S."/>
            <person name="Morris K."/>
            <person name="Mottagui-Tabar S."/>
            <person name="Mulder N."/>
            <person name="Nakano N."/>
            <person name="Nakauchi H."/>
            <person name="Ng P."/>
            <person name="Nilsson R."/>
            <person name="Nishiguchi S."/>
            <person name="Nishikawa S."/>
            <person name="Nori F."/>
            <person name="Ohara O."/>
            <person name="Okazaki Y."/>
            <person name="Orlando V."/>
            <person name="Pang K.C."/>
            <person name="Pavan W.J."/>
            <person name="Pavesi G."/>
            <person name="Pesole G."/>
            <person name="Petrovsky N."/>
            <person name="Piazza S."/>
            <person name="Reed J."/>
            <person name="Reid J.F."/>
            <person name="Ring B.Z."/>
            <person name="Ringwald M."/>
            <person name="Rost B."/>
            <person name="Ruan Y."/>
            <person name="Salzberg S.L."/>
            <person name="Sandelin A."/>
            <person name="Schneider C."/>
            <person name="Schoenbach C."/>
            <person name="Sekiguchi K."/>
            <person name="Semple C.A."/>
            <person name="Seno S."/>
            <person name="Sessa L."/>
            <person name="Sheng Y."/>
            <person name="Shibata Y."/>
            <person name="Shimada H."/>
            <person name="Shimada K."/>
            <person name="Silva D."/>
            <person name="Sinclair B."/>
            <person name="Sperling S."/>
            <person name="Stupka E."/>
            <person name="Sugiura K."/>
            <person name="Sultana R."/>
            <person name="Takenaka Y."/>
            <person name="Taki K."/>
            <person name="Tammoja K."/>
            <person name="Tan S.L."/>
            <person name="Tang S."/>
            <person name="Taylor M.S."/>
            <person name="Tegner J."/>
            <person name="Teichmann S.A."/>
            <person name="Ueda H.R."/>
            <person name="van Nimwegen E."/>
            <person name="Verardo R."/>
            <person name="Wei C.L."/>
            <person name="Yagi K."/>
            <person name="Yamanishi H."/>
            <person name="Zabarovsky E."/>
            <person name="Zhu S."/>
            <person name="Zimmer A."/>
            <person name="Hide W."/>
            <person name="Bult C."/>
            <person name="Grimmond S.M."/>
            <person name="Teasdale R.D."/>
            <person name="Liu E.T."/>
            <person name="Brusic V."/>
            <person name="Quackenbush J."/>
            <person name="Wahlestedt C."/>
            <person name="Mattick J.S."/>
            <person name="Hume D.A."/>
            <person name="Kai C."/>
            <person name="Sasaki D."/>
            <person name="Tomaru Y."/>
            <person name="Fukuda S."/>
            <person name="Kanamori-Katayama M."/>
            <person name="Suzuki M."/>
            <person name="Aoki J."/>
            <person name="Arakawa T."/>
            <person name="Iida J."/>
            <person name="Imamura K."/>
            <person name="Itoh M."/>
            <person name="Kato T."/>
            <person name="Kawaji H."/>
            <person name="Kawagashira N."/>
            <person name="Kawashima T."/>
            <person name="Kojima M."/>
            <person name="Kondo S."/>
            <person name="Konno H."/>
            <person name="Nakano K."/>
            <person name="Ninomiya N."/>
            <person name="Nishio T."/>
            <person name="Okada M."/>
            <person name="Plessy C."/>
            <person name="Shibata K."/>
            <person name="Shiraki T."/>
            <person name="Suzuki S."/>
            <person name="Tagami M."/>
            <person name="Waki K."/>
            <person name="Watahiki A."/>
            <person name="Okamura-Oho Y."/>
            <person name="Suzuki H."/>
            <person name="Kawai J."/>
            <person name="Hayashizaki Y."/>
        </authorList>
    </citation>
    <scope>NUCLEOTIDE SEQUENCE [LARGE SCALE MRNA]</scope>
    <source>
        <strain evidence="4">C57BL/6J</strain>
        <tissue evidence="4">Aorta</tissue>
    </source>
</reference>
<reference evidence="3" key="2">
    <citation type="journal article" date="2004" name="Genome Res.">
        <title>The status, quality, and expansion of the NIH full-length cDNA project: the Mammalian Gene Collection (MGC).</title>
        <authorList>
            <consortium name="The MGC Project Team"/>
        </authorList>
    </citation>
    <scope>NUCLEOTIDE SEQUENCE [LARGE SCALE MRNA]</scope>
    <source>
        <tissue evidence="3">Mammary tumor</tissue>
    </source>
</reference>
<reference key="3">
    <citation type="journal article" date="2010" name="Cell">
        <title>A tissue-specific atlas of mouse protein phosphorylation and expression.</title>
        <authorList>
            <person name="Huttlin E.L."/>
            <person name="Jedrychowski M.P."/>
            <person name="Elias J.E."/>
            <person name="Goswami T."/>
            <person name="Rad R."/>
            <person name="Beausoleil S.A."/>
            <person name="Villen J."/>
            <person name="Haas W."/>
            <person name="Sowa M.E."/>
            <person name="Gygi S.P."/>
        </authorList>
    </citation>
    <scope>IDENTIFICATION BY MASS SPECTROMETRY [LARGE SCALE ANALYSIS]</scope>
    <source>
        <tissue>Kidney</tissue>
        <tissue>Liver</tissue>
        <tissue>Spleen</tissue>
    </source>
</reference>
<proteinExistence type="evidence at protein level"/>
<name>RBSK_MOUSE</name>
<feature type="chain" id="PRO_0000375977" description="Ribokinase">
    <location>
        <begin position="1"/>
        <end position="323"/>
    </location>
</feature>
<feature type="active site" description="Proton acceptor" evidence="2">
    <location>
        <position position="270"/>
    </location>
</feature>
<feature type="binding site" evidence="2">
    <location>
        <begin position="26"/>
        <end position="28"/>
    </location>
    <ligand>
        <name>substrate</name>
    </ligand>
</feature>
<feature type="binding site" evidence="2">
    <location>
        <begin position="54"/>
        <end position="58"/>
    </location>
    <ligand>
        <name>substrate</name>
    </ligand>
</feature>
<feature type="binding site" evidence="2">
    <location>
        <position position="155"/>
    </location>
    <ligand>
        <name>substrate</name>
    </ligand>
</feature>
<feature type="binding site" evidence="2">
    <location>
        <position position="200"/>
    </location>
    <ligand>
        <name>ATP</name>
        <dbReference type="ChEBI" id="CHEBI:30616"/>
    </ligand>
</feature>
<feature type="binding site" evidence="2">
    <location>
        <begin position="236"/>
        <end position="241"/>
    </location>
    <ligand>
        <name>ATP</name>
        <dbReference type="ChEBI" id="CHEBI:30616"/>
    </ligand>
</feature>
<feature type="binding site" evidence="2">
    <location>
        <position position="257"/>
    </location>
    <ligand>
        <name>ATP</name>
        <dbReference type="ChEBI" id="CHEBI:30616"/>
    </ligand>
</feature>
<feature type="binding site" evidence="2">
    <location>
        <position position="264"/>
    </location>
    <ligand>
        <name>K(+)</name>
        <dbReference type="ChEBI" id="CHEBI:29103"/>
    </ligand>
</feature>
<feature type="binding site" evidence="2">
    <location>
        <position position="266"/>
    </location>
    <ligand>
        <name>K(+)</name>
        <dbReference type="ChEBI" id="CHEBI:29103"/>
    </ligand>
</feature>
<feature type="binding site" evidence="2">
    <location>
        <begin position="269"/>
        <end position="270"/>
    </location>
    <ligand>
        <name>ATP</name>
        <dbReference type="ChEBI" id="CHEBI:30616"/>
    </ligand>
</feature>
<feature type="binding site" evidence="2">
    <location>
        <position position="270"/>
    </location>
    <ligand>
        <name>substrate</name>
    </ligand>
</feature>
<feature type="binding site" evidence="2">
    <location>
        <position position="296"/>
    </location>
    <ligand>
        <name>ATP</name>
        <dbReference type="ChEBI" id="CHEBI:30616"/>
    </ligand>
</feature>
<feature type="binding site" evidence="2">
    <location>
        <position position="302"/>
    </location>
    <ligand>
        <name>K(+)</name>
        <dbReference type="ChEBI" id="CHEBI:29103"/>
    </ligand>
</feature>
<feature type="binding site" evidence="2">
    <location>
        <position position="305"/>
    </location>
    <ligand>
        <name>K(+)</name>
        <dbReference type="ChEBI" id="CHEBI:29103"/>
    </ligand>
</feature>
<feature type="binding site" evidence="2">
    <location>
        <position position="307"/>
    </location>
    <ligand>
        <name>K(+)</name>
        <dbReference type="ChEBI" id="CHEBI:29103"/>
    </ligand>
</feature>
<feature type="binding site" evidence="2">
    <location>
        <position position="311"/>
    </location>
    <ligand>
        <name>K(+)</name>
        <dbReference type="ChEBI" id="CHEBI:29103"/>
    </ligand>
</feature>
<gene>
    <name evidence="2 3 5" type="primary">Rbks</name>
    <name evidence="1" type="synonym">Rbsk</name>
</gene>
<organism>
    <name type="scientific">Mus musculus</name>
    <name type="common">Mouse</name>
    <dbReference type="NCBI Taxonomy" id="10090"/>
    <lineage>
        <taxon>Eukaryota</taxon>
        <taxon>Metazoa</taxon>
        <taxon>Chordata</taxon>
        <taxon>Craniata</taxon>
        <taxon>Vertebrata</taxon>
        <taxon>Euteleostomi</taxon>
        <taxon>Mammalia</taxon>
        <taxon>Eutheria</taxon>
        <taxon>Euarchontoglires</taxon>
        <taxon>Glires</taxon>
        <taxon>Rodentia</taxon>
        <taxon>Myomorpha</taxon>
        <taxon>Muroidea</taxon>
        <taxon>Muridae</taxon>
        <taxon>Murinae</taxon>
        <taxon>Mus</taxon>
        <taxon>Mus</taxon>
    </lineage>
</organism>
<comment type="function">
    <text evidence="2">Catalyzes the phosphorylation of ribose at O-5 in a reaction requiring ATP and magnesium. The resulting D-ribose-5-phosphate can then be used either for sythesis of nucleotides, histidine, and tryptophan, or as a component of the pentose phosphate pathway.</text>
</comment>
<comment type="catalytic activity">
    <reaction evidence="2">
        <text>D-ribose + ATP = D-ribose 5-phosphate + ADP + H(+)</text>
        <dbReference type="Rhea" id="RHEA:13697"/>
        <dbReference type="ChEBI" id="CHEBI:15378"/>
        <dbReference type="ChEBI" id="CHEBI:30616"/>
        <dbReference type="ChEBI" id="CHEBI:47013"/>
        <dbReference type="ChEBI" id="CHEBI:78346"/>
        <dbReference type="ChEBI" id="CHEBI:456216"/>
        <dbReference type="EC" id="2.7.1.15"/>
    </reaction>
</comment>
<comment type="cofactor">
    <cofactor evidence="2">
        <name>Mg(2+)</name>
        <dbReference type="ChEBI" id="CHEBI:18420"/>
    </cofactor>
    <text evidence="2">Requires a divalent cation, most likely magnesium in vivo, as an electrophilic catalyst to aid phosphoryl group transfer. It is the chelate of the metal and the nucleotide that is the actual substrate.</text>
</comment>
<comment type="activity regulation">
    <text evidence="1 2">Activated by a monovalent cation that binds near, but not in, the active site. The most likely occupant of the site in vivo is potassium. Ion binding induces a conformational change that may alter substrate affinity. Competitively inhibited by phosphonoacetic acid, etidronate, 2-carboxethylphosphonic acid, N-(phosphonomethyl)glycine, N-(phosphonomethyl)iminodiacetic acid and clodronate (By similarity).</text>
</comment>
<comment type="pathway">
    <text evidence="2">Carbohydrate metabolism; D-ribose degradation; D-ribose 5-phosphate from beta-D-ribopyranose: step 2/2.</text>
</comment>
<comment type="subunit">
    <text evidence="2">Homodimer.</text>
</comment>
<comment type="subcellular location">
    <subcellularLocation>
        <location evidence="2">Cytoplasm</location>
    </subcellularLocation>
    <subcellularLocation>
        <location evidence="2">Nucleus</location>
    </subcellularLocation>
</comment>
<comment type="similarity">
    <text evidence="2">Belongs to the carbohydrate kinase PfkB family. Ribokinase subfamily.</text>
</comment>
<dbReference type="EC" id="2.7.1.15" evidence="2"/>
<dbReference type="EMBL" id="AK138939">
    <property type="protein sequence ID" value="BAE23825.1"/>
    <property type="molecule type" value="mRNA"/>
</dbReference>
<dbReference type="EMBL" id="BC023339">
    <property type="protein sequence ID" value="AAH23339.1"/>
    <property type="molecule type" value="mRNA"/>
</dbReference>
<dbReference type="CCDS" id="CCDS19187.1"/>
<dbReference type="RefSeq" id="NP_694876.1">
    <property type="nucleotide sequence ID" value="NM_153196.2"/>
</dbReference>
<dbReference type="SMR" id="Q8R1Q9"/>
<dbReference type="BioGRID" id="214646">
    <property type="interactions" value="1"/>
</dbReference>
<dbReference type="FunCoup" id="Q8R1Q9">
    <property type="interactions" value="673"/>
</dbReference>
<dbReference type="STRING" id="10090.ENSMUSP00000031018"/>
<dbReference type="iPTMnet" id="Q8R1Q9"/>
<dbReference type="PhosphoSitePlus" id="Q8R1Q9"/>
<dbReference type="SwissPalm" id="Q8R1Q9"/>
<dbReference type="PaxDb" id="10090-ENSMUSP00000031018"/>
<dbReference type="PeptideAtlas" id="Q8R1Q9"/>
<dbReference type="ProteomicsDB" id="255162"/>
<dbReference type="Antibodypedia" id="13898">
    <property type="antibodies" value="136 antibodies from 22 providers"/>
</dbReference>
<dbReference type="DNASU" id="71336"/>
<dbReference type="Ensembl" id="ENSMUST00000031018.10">
    <property type="protein sequence ID" value="ENSMUSP00000031018.8"/>
    <property type="gene ID" value="ENSMUSG00000029136.10"/>
</dbReference>
<dbReference type="GeneID" id="71336"/>
<dbReference type="KEGG" id="mmu:71336"/>
<dbReference type="UCSC" id="uc008wyv.1">
    <property type="organism name" value="mouse"/>
</dbReference>
<dbReference type="AGR" id="MGI:1918586"/>
<dbReference type="CTD" id="64080"/>
<dbReference type="MGI" id="MGI:1918586">
    <property type="gene designation" value="Rbks"/>
</dbReference>
<dbReference type="VEuPathDB" id="HostDB:ENSMUSG00000029136"/>
<dbReference type="eggNOG" id="KOG2855">
    <property type="taxonomic scope" value="Eukaryota"/>
</dbReference>
<dbReference type="GeneTree" id="ENSGT00390000005743"/>
<dbReference type="HOGENOM" id="CLU_027634_2_3_1"/>
<dbReference type="InParanoid" id="Q8R1Q9"/>
<dbReference type="OMA" id="DIVLIQQ"/>
<dbReference type="OrthoDB" id="415590at2759"/>
<dbReference type="PhylomeDB" id="Q8R1Q9"/>
<dbReference type="TreeFam" id="TF105770"/>
<dbReference type="Reactome" id="R-MMU-71336">
    <property type="pathway name" value="Pentose phosphate pathway"/>
</dbReference>
<dbReference type="UniPathway" id="UPA00916">
    <property type="reaction ID" value="UER00889"/>
</dbReference>
<dbReference type="BioGRID-ORCS" id="71336">
    <property type="hits" value="1 hit in 78 CRISPR screens"/>
</dbReference>
<dbReference type="ChiTaRS" id="Rbks">
    <property type="organism name" value="mouse"/>
</dbReference>
<dbReference type="PRO" id="PR:Q8R1Q9"/>
<dbReference type="Proteomes" id="UP000000589">
    <property type="component" value="Chromosome 5"/>
</dbReference>
<dbReference type="RNAct" id="Q8R1Q9">
    <property type="molecule type" value="protein"/>
</dbReference>
<dbReference type="Bgee" id="ENSMUSG00000029136">
    <property type="expression patterns" value="Expressed in lumbar dorsal root ganglion and 129 other cell types or tissues"/>
</dbReference>
<dbReference type="GO" id="GO:0005829">
    <property type="term" value="C:cytosol"/>
    <property type="evidence" value="ECO:0000266"/>
    <property type="project" value="MGI"/>
</dbReference>
<dbReference type="GO" id="GO:0005634">
    <property type="term" value="C:nucleus"/>
    <property type="evidence" value="ECO:0007669"/>
    <property type="project" value="UniProtKB-SubCell"/>
</dbReference>
<dbReference type="GO" id="GO:0005524">
    <property type="term" value="F:ATP binding"/>
    <property type="evidence" value="ECO:0007669"/>
    <property type="project" value="UniProtKB-UniRule"/>
</dbReference>
<dbReference type="GO" id="GO:0042802">
    <property type="term" value="F:identical protein binding"/>
    <property type="evidence" value="ECO:0007669"/>
    <property type="project" value="Ensembl"/>
</dbReference>
<dbReference type="GO" id="GO:0046872">
    <property type="term" value="F:metal ion binding"/>
    <property type="evidence" value="ECO:0007669"/>
    <property type="project" value="UniProtKB-KW"/>
</dbReference>
<dbReference type="GO" id="GO:0004747">
    <property type="term" value="F:ribokinase activity"/>
    <property type="evidence" value="ECO:0000315"/>
    <property type="project" value="MGI"/>
</dbReference>
<dbReference type="GO" id="GO:0019303">
    <property type="term" value="P:D-ribose catabolic process"/>
    <property type="evidence" value="ECO:0007669"/>
    <property type="project" value="UniProtKB-UniRule"/>
</dbReference>
<dbReference type="GO" id="GO:0006098">
    <property type="term" value="P:pentose-phosphate shunt"/>
    <property type="evidence" value="ECO:0000314"/>
    <property type="project" value="MGI"/>
</dbReference>
<dbReference type="CDD" id="cd01174">
    <property type="entry name" value="ribokinase"/>
    <property type="match status" value="1"/>
</dbReference>
<dbReference type="FunFam" id="3.40.1190.20:FF:000022">
    <property type="entry name" value="Ribokinase"/>
    <property type="match status" value="1"/>
</dbReference>
<dbReference type="Gene3D" id="3.40.1190.20">
    <property type="match status" value="1"/>
</dbReference>
<dbReference type="HAMAP" id="MF_01987">
    <property type="entry name" value="Ribokinase"/>
    <property type="match status" value="1"/>
</dbReference>
<dbReference type="InterPro" id="IPR002173">
    <property type="entry name" value="Carboh/pur_kinase_PfkB_CS"/>
</dbReference>
<dbReference type="InterPro" id="IPR011611">
    <property type="entry name" value="PfkB_dom"/>
</dbReference>
<dbReference type="InterPro" id="IPR002139">
    <property type="entry name" value="Ribo/fructo_kinase"/>
</dbReference>
<dbReference type="InterPro" id="IPR011877">
    <property type="entry name" value="Ribokinase"/>
</dbReference>
<dbReference type="InterPro" id="IPR029056">
    <property type="entry name" value="Ribokinase-like"/>
</dbReference>
<dbReference type="NCBIfam" id="TIGR02152">
    <property type="entry name" value="D_ribokin_bact"/>
    <property type="match status" value="1"/>
</dbReference>
<dbReference type="PANTHER" id="PTHR10584:SF166">
    <property type="entry name" value="RIBOKINASE"/>
    <property type="match status" value="1"/>
</dbReference>
<dbReference type="PANTHER" id="PTHR10584">
    <property type="entry name" value="SUGAR KINASE"/>
    <property type="match status" value="1"/>
</dbReference>
<dbReference type="Pfam" id="PF00294">
    <property type="entry name" value="PfkB"/>
    <property type="match status" value="1"/>
</dbReference>
<dbReference type="PRINTS" id="PR00990">
    <property type="entry name" value="RIBOKINASE"/>
</dbReference>
<dbReference type="SUPFAM" id="SSF53613">
    <property type="entry name" value="Ribokinase-like"/>
    <property type="match status" value="1"/>
</dbReference>
<dbReference type="PROSITE" id="PS00584">
    <property type="entry name" value="PFKB_KINASES_2"/>
    <property type="match status" value="1"/>
</dbReference>
<protein>
    <recommendedName>
        <fullName evidence="2 3">Ribokinase</fullName>
        <shortName evidence="2">RK</shortName>
        <ecNumber evidence="2">2.7.1.15</ecNumber>
    </recommendedName>
</protein>
<sequence length="323" mass="34119">MAACGEPGRPWQEEEAAAVVVVGSCMTDLVSLTSRLPKTGETIHGHEFFIGFGGKGANQCVQAARLGAKAAIVCKVGNDSFGNDYIENLKQNHISTEFTYQTRDAATGTASIIVNNEGQNIIVIVAGANLFLNSEDLKKAASVISRAKVMICQLEISPAASLEALTMARRSGVKTLFNPAPAMADLDPQFYTLSSIFCCNESEAEILTGHAVSDPTTAGKAAMILLERGCQVVVITLGASGCVILSQAEPVPKHIPTEAVKAVDTTGAGDSFVGALAFYLAYYPNLSLEEMLKRSNFIAAVSVQATGTQSSYPYKKDLPLALF</sequence>
<keyword id="KW-0067">ATP-binding</keyword>
<keyword id="KW-0119">Carbohydrate metabolism</keyword>
<keyword id="KW-0963">Cytoplasm</keyword>
<keyword id="KW-0418">Kinase</keyword>
<keyword id="KW-0460">Magnesium</keyword>
<keyword id="KW-0479">Metal-binding</keyword>
<keyword id="KW-0547">Nucleotide-binding</keyword>
<keyword id="KW-0539">Nucleus</keyword>
<keyword id="KW-0630">Potassium</keyword>
<keyword id="KW-1185">Reference proteome</keyword>
<keyword id="KW-0808">Transferase</keyword>